<evidence type="ECO:0000250" key="1">
    <source>
        <dbReference type="UniProtKB" id="Q9GZP4"/>
    </source>
</evidence>
<evidence type="ECO:0000255" key="2">
    <source>
        <dbReference type="PROSITE-ProRule" id="PRU00864"/>
    </source>
</evidence>
<evidence type="ECO:0000305" key="3"/>
<proteinExistence type="evidence at transcript level"/>
<keyword id="KW-0010">Activator</keyword>
<keyword id="KW-0963">Cytoplasm</keyword>
<keyword id="KW-1185">Reference proteome</keyword>
<keyword id="KW-0804">Transcription</keyword>
<keyword id="KW-0805">Transcription regulation</keyword>
<dbReference type="EMBL" id="BC066423">
    <property type="protein sequence ID" value="AAH66423.1"/>
    <property type="molecule type" value="mRNA"/>
</dbReference>
<dbReference type="RefSeq" id="NP_996957.1">
    <property type="nucleotide sequence ID" value="NM_207074.1"/>
</dbReference>
<dbReference type="SMR" id="Q6NYX8"/>
<dbReference type="FunCoup" id="Q6NYX8">
    <property type="interactions" value="2374"/>
</dbReference>
<dbReference type="STRING" id="7955.ENSDARP00000138466"/>
<dbReference type="GeneID" id="404606"/>
<dbReference type="KEGG" id="dre:404606"/>
<dbReference type="AGR" id="ZFIN:ZDB-GENE-040426-2366"/>
<dbReference type="CTD" id="57095"/>
<dbReference type="ZFIN" id="ZDB-GENE-040426-2366">
    <property type="gene designation" value="pithd1"/>
</dbReference>
<dbReference type="InParanoid" id="Q6NYX8"/>
<dbReference type="OrthoDB" id="2635at2759"/>
<dbReference type="PhylomeDB" id="Q6NYX8"/>
<dbReference type="PRO" id="PR:Q6NYX8"/>
<dbReference type="Proteomes" id="UP000000437">
    <property type="component" value="Chromosome 19"/>
</dbReference>
<dbReference type="GO" id="GO:0005737">
    <property type="term" value="C:cytoplasm"/>
    <property type="evidence" value="ECO:0000250"/>
    <property type="project" value="UniProtKB"/>
</dbReference>
<dbReference type="GO" id="GO:0005634">
    <property type="term" value="C:nucleus"/>
    <property type="evidence" value="ECO:0000318"/>
    <property type="project" value="GO_Central"/>
</dbReference>
<dbReference type="GO" id="GO:0045893">
    <property type="term" value="P:positive regulation of DNA-templated transcription"/>
    <property type="evidence" value="ECO:0000250"/>
    <property type="project" value="UniProtKB"/>
</dbReference>
<dbReference type="GO" id="GO:0045654">
    <property type="term" value="P:positive regulation of megakaryocyte differentiation"/>
    <property type="evidence" value="ECO:0000250"/>
    <property type="project" value="UniProtKB"/>
</dbReference>
<dbReference type="FunFam" id="2.60.120.470:FF:000002">
    <property type="entry name" value="PITH domain-containing protein 1"/>
    <property type="match status" value="1"/>
</dbReference>
<dbReference type="Gene3D" id="2.60.120.470">
    <property type="entry name" value="PITH domain"/>
    <property type="match status" value="1"/>
</dbReference>
<dbReference type="InterPro" id="IPR008979">
    <property type="entry name" value="Galactose-bd-like_sf"/>
</dbReference>
<dbReference type="InterPro" id="IPR045099">
    <property type="entry name" value="PITH1-like"/>
</dbReference>
<dbReference type="InterPro" id="IPR010400">
    <property type="entry name" value="PITH_dom"/>
</dbReference>
<dbReference type="InterPro" id="IPR037047">
    <property type="entry name" value="PITH_dom_sf"/>
</dbReference>
<dbReference type="PANTHER" id="PTHR12175">
    <property type="entry name" value="AD039 HT014 THIOREDOXIN FAMILY TRP26"/>
    <property type="match status" value="1"/>
</dbReference>
<dbReference type="PANTHER" id="PTHR12175:SF1">
    <property type="entry name" value="PITH DOMAIN-CONTAINING PROTEIN 1"/>
    <property type="match status" value="1"/>
</dbReference>
<dbReference type="Pfam" id="PF06201">
    <property type="entry name" value="PITH"/>
    <property type="match status" value="1"/>
</dbReference>
<dbReference type="SUPFAM" id="SSF49785">
    <property type="entry name" value="Galactose-binding domain-like"/>
    <property type="match status" value="1"/>
</dbReference>
<dbReference type="PROSITE" id="PS51532">
    <property type="entry name" value="PITH"/>
    <property type="match status" value="1"/>
</dbReference>
<protein>
    <recommendedName>
        <fullName>PITH domain-containing protein 1</fullName>
    </recommendedName>
</protein>
<reference key="1">
    <citation type="submission" date="2004-02" db="EMBL/GenBank/DDBJ databases">
        <authorList>
            <consortium name="NIH - Zebrafish Gene Collection (ZGC) project"/>
        </authorList>
    </citation>
    <scope>NUCLEOTIDE SEQUENCE [LARGE SCALE MRNA]</scope>
    <source>
        <tissue>Embryo</tissue>
    </source>
</reference>
<gene>
    <name type="primary">pithd1</name>
    <name type="ORF">zgc:77241</name>
</gene>
<name>PITH1_DANRE</name>
<comment type="function">
    <text evidence="1">May play a role in promoting megakaryocyte differentiation by up-regulating RUNX1 expression.</text>
</comment>
<comment type="subcellular location">
    <subcellularLocation>
        <location evidence="1">Cytoplasm</location>
    </subcellularLocation>
</comment>
<comment type="similarity">
    <text evidence="3">Belongs to the PITHD1 family.</text>
</comment>
<sequence length="210" mass="24058">MSGHGHGHGHGHGCCECEHEPAERGVEYELYRRIDIEKLQCLNESRDGDGKLVFKPWDQRTDRNKFVESDADEELLFNIPFTGSVKLKGIIISGEDDESHPAEIRLFKNIPQMSFDDTSREPEQAFRLNRDPRAELEYPTKIARFSNVEHLSIHVSRNFGAESTRVYYIGLRGEYTEAHRHEVTICNYEAAANPADHKVESITPQTQFIS</sequence>
<accession>Q6NYX8</accession>
<feature type="chain" id="PRO_0000285034" description="PITH domain-containing protein 1">
    <location>
        <begin position="1"/>
        <end position="210"/>
    </location>
</feature>
<feature type="domain" description="PITH" evidence="2">
    <location>
        <begin position="19"/>
        <end position="191"/>
    </location>
</feature>
<organism>
    <name type="scientific">Danio rerio</name>
    <name type="common">Zebrafish</name>
    <name type="synonym">Brachydanio rerio</name>
    <dbReference type="NCBI Taxonomy" id="7955"/>
    <lineage>
        <taxon>Eukaryota</taxon>
        <taxon>Metazoa</taxon>
        <taxon>Chordata</taxon>
        <taxon>Craniata</taxon>
        <taxon>Vertebrata</taxon>
        <taxon>Euteleostomi</taxon>
        <taxon>Actinopterygii</taxon>
        <taxon>Neopterygii</taxon>
        <taxon>Teleostei</taxon>
        <taxon>Ostariophysi</taxon>
        <taxon>Cypriniformes</taxon>
        <taxon>Danionidae</taxon>
        <taxon>Danioninae</taxon>
        <taxon>Danio</taxon>
    </lineage>
</organism>